<feature type="chain" id="PRO_0000267711" description="3-octaprenyl-4-hydroxybenzoate carboxy-lyase">
    <location>
        <begin position="1"/>
        <end position="498"/>
    </location>
</feature>
<feature type="active site" description="Proton donor" evidence="1">
    <location>
        <position position="290"/>
    </location>
</feature>
<feature type="binding site" evidence="1">
    <location>
        <position position="175"/>
    </location>
    <ligand>
        <name>Mn(2+)</name>
        <dbReference type="ChEBI" id="CHEBI:29035"/>
    </ligand>
</feature>
<feature type="binding site" evidence="1">
    <location>
        <begin position="178"/>
        <end position="180"/>
    </location>
    <ligand>
        <name>prenylated FMN</name>
        <dbReference type="ChEBI" id="CHEBI:87746"/>
    </ligand>
</feature>
<feature type="binding site" evidence="1">
    <location>
        <begin position="192"/>
        <end position="194"/>
    </location>
    <ligand>
        <name>prenylated FMN</name>
        <dbReference type="ChEBI" id="CHEBI:87746"/>
    </ligand>
</feature>
<feature type="binding site" evidence="1">
    <location>
        <begin position="197"/>
        <end position="198"/>
    </location>
    <ligand>
        <name>prenylated FMN</name>
        <dbReference type="ChEBI" id="CHEBI:87746"/>
    </ligand>
</feature>
<feature type="binding site" evidence="1">
    <location>
        <position position="241"/>
    </location>
    <ligand>
        <name>Mn(2+)</name>
        <dbReference type="ChEBI" id="CHEBI:29035"/>
    </ligand>
</feature>
<organism>
    <name type="scientific">Yersinia pestis bv. Antiqua (strain Antiqua)</name>
    <dbReference type="NCBI Taxonomy" id="360102"/>
    <lineage>
        <taxon>Bacteria</taxon>
        <taxon>Pseudomonadati</taxon>
        <taxon>Pseudomonadota</taxon>
        <taxon>Gammaproteobacteria</taxon>
        <taxon>Enterobacterales</taxon>
        <taxon>Yersiniaceae</taxon>
        <taxon>Yersinia</taxon>
    </lineage>
</organism>
<protein>
    <recommendedName>
        <fullName evidence="1">3-octaprenyl-4-hydroxybenzoate carboxy-lyase</fullName>
        <ecNumber evidence="1">4.1.1.98</ecNumber>
    </recommendedName>
    <alternativeName>
        <fullName evidence="1">Polyprenyl p-hydroxybenzoate decarboxylase</fullName>
    </alternativeName>
</protein>
<dbReference type="EC" id="4.1.1.98" evidence="1"/>
<dbReference type="EMBL" id="CP000308">
    <property type="protein sequence ID" value="ABG15401.1"/>
    <property type="status" value="ALT_INIT"/>
    <property type="molecule type" value="Genomic_DNA"/>
</dbReference>
<dbReference type="RefSeq" id="WP_002215917.1">
    <property type="nucleotide sequence ID" value="NZ_CP009906.1"/>
</dbReference>
<dbReference type="SMR" id="Q1C2C1"/>
<dbReference type="GeneID" id="57974939"/>
<dbReference type="KEGG" id="ypa:YPA_3439"/>
<dbReference type="UniPathway" id="UPA00232"/>
<dbReference type="Proteomes" id="UP000001971">
    <property type="component" value="Chromosome"/>
</dbReference>
<dbReference type="GO" id="GO:0005829">
    <property type="term" value="C:cytosol"/>
    <property type="evidence" value="ECO:0007669"/>
    <property type="project" value="TreeGrafter"/>
</dbReference>
<dbReference type="GO" id="GO:0005886">
    <property type="term" value="C:plasma membrane"/>
    <property type="evidence" value="ECO:0007669"/>
    <property type="project" value="UniProtKB-SubCell"/>
</dbReference>
<dbReference type="GO" id="GO:0008694">
    <property type="term" value="F:3-octaprenyl-4-hydroxybenzoate carboxy-lyase activity"/>
    <property type="evidence" value="ECO:0007669"/>
    <property type="project" value="UniProtKB-UniRule"/>
</dbReference>
<dbReference type="GO" id="GO:0046872">
    <property type="term" value="F:metal ion binding"/>
    <property type="evidence" value="ECO:0007669"/>
    <property type="project" value="UniProtKB-KW"/>
</dbReference>
<dbReference type="GO" id="GO:0006744">
    <property type="term" value="P:ubiquinone biosynthetic process"/>
    <property type="evidence" value="ECO:0007669"/>
    <property type="project" value="UniProtKB-UniRule"/>
</dbReference>
<dbReference type="FunFam" id="1.20.5.570:FF:000001">
    <property type="entry name" value="3-octaprenyl-4-hydroxybenzoate carboxy-lyase"/>
    <property type="match status" value="1"/>
</dbReference>
<dbReference type="FunFam" id="3.40.1670.10:FF:000001">
    <property type="entry name" value="3-octaprenyl-4-hydroxybenzoate carboxy-lyase"/>
    <property type="match status" value="1"/>
</dbReference>
<dbReference type="Gene3D" id="1.20.5.570">
    <property type="entry name" value="Single helix bin"/>
    <property type="match status" value="1"/>
</dbReference>
<dbReference type="Gene3D" id="3.40.1670.10">
    <property type="entry name" value="UbiD C-terminal domain-like"/>
    <property type="match status" value="1"/>
</dbReference>
<dbReference type="HAMAP" id="MF_01636">
    <property type="entry name" value="UbiD"/>
    <property type="match status" value="1"/>
</dbReference>
<dbReference type="InterPro" id="IPR002830">
    <property type="entry name" value="UbiD"/>
</dbReference>
<dbReference type="InterPro" id="IPR049381">
    <property type="entry name" value="UbiD-like_C"/>
</dbReference>
<dbReference type="InterPro" id="IPR049383">
    <property type="entry name" value="UbiD-like_N"/>
</dbReference>
<dbReference type="InterPro" id="IPR023677">
    <property type="entry name" value="UbiD_bacteria"/>
</dbReference>
<dbReference type="InterPro" id="IPR048304">
    <property type="entry name" value="UbiD_Rift_dom"/>
</dbReference>
<dbReference type="NCBIfam" id="NF008175">
    <property type="entry name" value="PRK10922.1"/>
    <property type="match status" value="1"/>
</dbReference>
<dbReference type="NCBIfam" id="TIGR00148">
    <property type="entry name" value="UbiD family decarboxylase"/>
    <property type="match status" value="1"/>
</dbReference>
<dbReference type="PANTHER" id="PTHR30108">
    <property type="entry name" value="3-OCTAPRENYL-4-HYDROXYBENZOATE CARBOXY-LYASE-RELATED"/>
    <property type="match status" value="1"/>
</dbReference>
<dbReference type="PANTHER" id="PTHR30108:SF17">
    <property type="entry name" value="FERULIC ACID DECARBOXYLASE 1"/>
    <property type="match status" value="1"/>
</dbReference>
<dbReference type="Pfam" id="PF01977">
    <property type="entry name" value="UbiD"/>
    <property type="match status" value="1"/>
</dbReference>
<dbReference type="Pfam" id="PF20696">
    <property type="entry name" value="UbiD_C"/>
    <property type="match status" value="1"/>
</dbReference>
<dbReference type="Pfam" id="PF20695">
    <property type="entry name" value="UbiD_N"/>
    <property type="match status" value="1"/>
</dbReference>
<dbReference type="SUPFAM" id="SSF50475">
    <property type="entry name" value="FMN-binding split barrel"/>
    <property type="match status" value="1"/>
</dbReference>
<dbReference type="SUPFAM" id="SSF143968">
    <property type="entry name" value="UbiD C-terminal domain-like"/>
    <property type="match status" value="1"/>
</dbReference>
<gene>
    <name evidence="1" type="primary">ubiD</name>
    <name type="ordered locus">YPA_3439</name>
</gene>
<comment type="function">
    <text evidence="1">Catalyzes the decarboxylation of 3-octaprenyl-4-hydroxy benzoate to 2-octaprenylphenol, an intermediate step in ubiquinone biosynthesis.</text>
</comment>
<comment type="catalytic activity">
    <reaction evidence="1">
        <text>a 4-hydroxy-3-(all-trans-polyprenyl)benzoate + H(+) = a 2-(all-trans-polyprenyl)phenol + CO2</text>
        <dbReference type="Rhea" id="RHEA:41680"/>
        <dbReference type="Rhea" id="RHEA-COMP:9514"/>
        <dbReference type="Rhea" id="RHEA-COMP:9516"/>
        <dbReference type="ChEBI" id="CHEBI:1269"/>
        <dbReference type="ChEBI" id="CHEBI:15378"/>
        <dbReference type="ChEBI" id="CHEBI:16526"/>
        <dbReference type="ChEBI" id="CHEBI:78396"/>
        <dbReference type="EC" id="4.1.1.98"/>
    </reaction>
</comment>
<comment type="cofactor">
    <cofactor evidence="1">
        <name>prenylated FMN</name>
        <dbReference type="ChEBI" id="CHEBI:87746"/>
    </cofactor>
    <text evidence="1">Binds 1 prenylated FMN per subunit.</text>
</comment>
<comment type="cofactor">
    <cofactor evidence="1">
        <name>Mn(2+)</name>
        <dbReference type="ChEBI" id="CHEBI:29035"/>
    </cofactor>
</comment>
<comment type="pathway">
    <text evidence="1">Cofactor biosynthesis; ubiquinone biosynthesis.</text>
</comment>
<comment type="subunit">
    <text evidence="1">Homohexamer.</text>
</comment>
<comment type="subcellular location">
    <subcellularLocation>
        <location evidence="1">Cell membrane</location>
        <topology evidence="1">Peripheral membrane protein</topology>
    </subcellularLocation>
</comment>
<comment type="similarity">
    <text evidence="1">Belongs to the UbiD family.</text>
</comment>
<comment type="sequence caution" evidence="2">
    <conflict type="erroneous initiation">
        <sequence resource="EMBL-CDS" id="ABG15401"/>
    </conflict>
</comment>
<keyword id="KW-1003">Cell membrane</keyword>
<keyword id="KW-0210">Decarboxylase</keyword>
<keyword id="KW-0285">Flavoprotein</keyword>
<keyword id="KW-0288">FMN</keyword>
<keyword id="KW-0456">Lyase</keyword>
<keyword id="KW-0464">Manganese</keyword>
<keyword id="KW-0472">Membrane</keyword>
<keyword id="KW-0479">Metal-binding</keyword>
<keyword id="KW-0831">Ubiquinone biosynthesis</keyword>
<proteinExistence type="inferred from homology"/>
<accession>Q1C2C1</accession>
<evidence type="ECO:0000255" key="1">
    <source>
        <dbReference type="HAMAP-Rule" id="MF_01636"/>
    </source>
</evidence>
<evidence type="ECO:0000305" key="2"/>
<sequence>MISMKYRDLRDFLSLLEQRGELKRISQPIDPYLEMTEIADRTLRAGGPALLFENPKGYSMPVLCNLFGTAKRVAMGMGQEDVSALRDVGKLLAFLKEPDPPKGFRDLFDKLPKFKQVLNMPTKRLNSAPCQEQVWQGEDVDLSRIPVMHCWPEDAAPLVSWGLTITRGPHKERQNLGIYRQQVLGKNKLIMRWLSHRGGALDYQEWCEAHPGERFPVAVALGADPATILAAVTPVPDTLSEYAFAGLLRGHKTEVVKCLSNDLEVPASAEIVLEGYIEQGDMAPEGPYGDHTGYYNEIDNFPVFTVTHITQRQDAIYHSTYTGRPPDEPAVMGVALNEVFVPILQKQFPEIVDFYLPPEGCSYRLAVVTIKKQYAGHAKRVMMGIWSFLRQFMYTKFVIVCDDDINARDWNDVIWAITTRMDPSRDTVLIENTPIDYLDFASPVSGLGSKMGLDATNKWPAETPREWGRPIKMDEDVRARIDALWDELAIFSDKDAKR</sequence>
<reference key="1">
    <citation type="journal article" date="2006" name="J. Bacteriol.">
        <title>Complete genome sequence of Yersinia pestis strains Antiqua and Nepal516: evidence of gene reduction in an emerging pathogen.</title>
        <authorList>
            <person name="Chain P.S.G."/>
            <person name="Hu P."/>
            <person name="Malfatti S.A."/>
            <person name="Radnedge L."/>
            <person name="Larimer F."/>
            <person name="Vergez L.M."/>
            <person name="Worsham P."/>
            <person name="Chu M.C."/>
            <person name="Andersen G.L."/>
        </authorList>
    </citation>
    <scope>NUCLEOTIDE SEQUENCE [LARGE SCALE GENOMIC DNA]</scope>
    <source>
        <strain>Antiqua</strain>
    </source>
</reference>
<name>UBID_YERPA</name>